<sequence>MEMERINENTIRVVIGNDDLTERGITVLDLLGNHKQIEGFFYSILEEVDVDHQFQDNDAVTFQVLPNRNGLELFISKNTDEDDVADESQGDASVDSEHPDQVSDQIKEHLLEKDNQKDFFSGFKSAANESNDIEDYLNDSGQPTTTRVVKLHSFEDMISLARVLRLENAASNLYRYQDAYYLELVFFVNESSRESIKDELAVAYEYAERTKVAPDVLAEHGQLIMDNSALELTRFHFLGNS</sequence>
<dbReference type="EMBL" id="CP000416">
    <property type="protein sequence ID" value="ABJ64275.1"/>
    <property type="molecule type" value="Genomic_DNA"/>
</dbReference>
<dbReference type="RefSeq" id="WP_011667905.1">
    <property type="nucleotide sequence ID" value="NC_008497.1"/>
</dbReference>
<dbReference type="SMR" id="Q03R97"/>
<dbReference type="STRING" id="387344.LVIS_1147"/>
<dbReference type="KEGG" id="lbr:LVIS_1147"/>
<dbReference type="eggNOG" id="COG4862">
    <property type="taxonomic scope" value="Bacteria"/>
</dbReference>
<dbReference type="HOGENOM" id="CLU_071496_2_0_9"/>
<dbReference type="Proteomes" id="UP000001652">
    <property type="component" value="Chromosome"/>
</dbReference>
<dbReference type="GO" id="GO:0030674">
    <property type="term" value="F:protein-macromolecule adaptor activity"/>
    <property type="evidence" value="ECO:0007669"/>
    <property type="project" value="UniProtKB-UniRule"/>
</dbReference>
<dbReference type="Gene3D" id="3.30.70.1950">
    <property type="match status" value="1"/>
</dbReference>
<dbReference type="HAMAP" id="MF_01124">
    <property type="entry name" value="MecA"/>
    <property type="match status" value="1"/>
</dbReference>
<dbReference type="InterPro" id="IPR038471">
    <property type="entry name" value="MecA_C_sf"/>
</dbReference>
<dbReference type="InterPro" id="IPR008681">
    <property type="entry name" value="Neg-reg_MecA"/>
</dbReference>
<dbReference type="PANTHER" id="PTHR39161">
    <property type="entry name" value="ADAPTER PROTEIN MECA"/>
    <property type="match status" value="1"/>
</dbReference>
<dbReference type="PANTHER" id="PTHR39161:SF1">
    <property type="entry name" value="ADAPTER PROTEIN MECA 1"/>
    <property type="match status" value="1"/>
</dbReference>
<dbReference type="Pfam" id="PF05389">
    <property type="entry name" value="MecA"/>
    <property type="match status" value="1"/>
</dbReference>
<dbReference type="PIRSF" id="PIRSF029008">
    <property type="entry name" value="MecA"/>
    <property type="match status" value="1"/>
</dbReference>
<proteinExistence type="inferred from homology"/>
<evidence type="ECO:0000255" key="1">
    <source>
        <dbReference type="HAMAP-Rule" id="MF_01124"/>
    </source>
</evidence>
<evidence type="ECO:0000256" key="2">
    <source>
        <dbReference type="SAM" id="MobiDB-lite"/>
    </source>
</evidence>
<name>MECA_LEVBA</name>
<comment type="function">
    <text evidence="1">Enables the recognition and targeting of unfolded and aggregated proteins to the ClpC protease or to other proteins involved in proteolysis.</text>
</comment>
<comment type="subunit">
    <text evidence="1">Homodimer.</text>
</comment>
<comment type="domain">
    <text>The N-terminal domain probably binds unfolded/aggregated proteins; the C-terminal domain interacts with ClpC.</text>
</comment>
<comment type="similarity">
    <text evidence="1">Belongs to the MecA family.</text>
</comment>
<organism>
    <name type="scientific">Levilactobacillus brevis (strain ATCC 367 / BCRC 12310 / CIP 105137 / JCM 1170 / LMG 11437 / NCIMB 947 / NCTC 947)</name>
    <name type="common">Lactobacillus brevis</name>
    <dbReference type="NCBI Taxonomy" id="387344"/>
    <lineage>
        <taxon>Bacteria</taxon>
        <taxon>Bacillati</taxon>
        <taxon>Bacillota</taxon>
        <taxon>Bacilli</taxon>
        <taxon>Lactobacillales</taxon>
        <taxon>Lactobacillaceae</taxon>
        <taxon>Levilactobacillus</taxon>
    </lineage>
</organism>
<reference key="1">
    <citation type="journal article" date="2006" name="Proc. Natl. Acad. Sci. U.S.A.">
        <title>Comparative genomics of the lactic acid bacteria.</title>
        <authorList>
            <person name="Makarova K.S."/>
            <person name="Slesarev A."/>
            <person name="Wolf Y.I."/>
            <person name="Sorokin A."/>
            <person name="Mirkin B."/>
            <person name="Koonin E.V."/>
            <person name="Pavlov A."/>
            <person name="Pavlova N."/>
            <person name="Karamychev V."/>
            <person name="Polouchine N."/>
            <person name="Shakhova V."/>
            <person name="Grigoriev I."/>
            <person name="Lou Y."/>
            <person name="Rohksar D."/>
            <person name="Lucas S."/>
            <person name="Huang K."/>
            <person name="Goodstein D.M."/>
            <person name="Hawkins T."/>
            <person name="Plengvidhya V."/>
            <person name="Welker D."/>
            <person name="Hughes J."/>
            <person name="Goh Y."/>
            <person name="Benson A."/>
            <person name="Baldwin K."/>
            <person name="Lee J.-H."/>
            <person name="Diaz-Muniz I."/>
            <person name="Dosti B."/>
            <person name="Smeianov V."/>
            <person name="Wechter W."/>
            <person name="Barabote R."/>
            <person name="Lorca G."/>
            <person name="Altermann E."/>
            <person name="Barrangou R."/>
            <person name="Ganesan B."/>
            <person name="Xie Y."/>
            <person name="Rawsthorne H."/>
            <person name="Tamir D."/>
            <person name="Parker C."/>
            <person name="Breidt F."/>
            <person name="Broadbent J.R."/>
            <person name="Hutkins R."/>
            <person name="O'Sullivan D."/>
            <person name="Steele J."/>
            <person name="Unlu G."/>
            <person name="Saier M.H. Jr."/>
            <person name="Klaenhammer T."/>
            <person name="Richardson P."/>
            <person name="Kozyavkin S."/>
            <person name="Weimer B.C."/>
            <person name="Mills D.A."/>
        </authorList>
    </citation>
    <scope>NUCLEOTIDE SEQUENCE [LARGE SCALE GENOMIC DNA]</scope>
    <source>
        <strain>ATCC 367 / BCRC 12310 / CIP 105137 / JCM 1170 / LMG 11437 / NCIMB 947 / NCTC 947</strain>
    </source>
</reference>
<protein>
    <recommendedName>
        <fullName evidence="1">Adapter protein MecA</fullName>
    </recommendedName>
</protein>
<feature type="chain" id="PRO_1000065338" description="Adapter protein MecA">
    <location>
        <begin position="1"/>
        <end position="241"/>
    </location>
</feature>
<feature type="region of interest" description="Disordered" evidence="2">
    <location>
        <begin position="77"/>
        <end position="102"/>
    </location>
</feature>
<feature type="compositionally biased region" description="Acidic residues" evidence="2">
    <location>
        <begin position="80"/>
        <end position="89"/>
    </location>
</feature>
<accession>Q03R97</accession>
<keyword id="KW-1185">Reference proteome</keyword>
<gene>
    <name evidence="1" type="primary">mecA</name>
    <name type="ordered locus">LVIS_1147</name>
</gene>